<evidence type="ECO:0000255" key="1">
    <source>
        <dbReference type="HAMAP-Rule" id="MF_00361"/>
    </source>
</evidence>
<accession>C1D6U5</accession>
<name>NADK_LARHH</name>
<keyword id="KW-0067">ATP-binding</keyword>
<keyword id="KW-0963">Cytoplasm</keyword>
<keyword id="KW-0418">Kinase</keyword>
<keyword id="KW-0520">NAD</keyword>
<keyword id="KW-0521">NADP</keyword>
<keyword id="KW-0547">Nucleotide-binding</keyword>
<keyword id="KW-1185">Reference proteome</keyword>
<keyword id="KW-0808">Transferase</keyword>
<feature type="chain" id="PRO_1000133575" description="NAD kinase">
    <location>
        <begin position="1"/>
        <end position="291"/>
    </location>
</feature>
<feature type="active site" description="Proton acceptor" evidence="1">
    <location>
        <position position="73"/>
    </location>
</feature>
<feature type="binding site" evidence="1">
    <location>
        <begin position="73"/>
        <end position="74"/>
    </location>
    <ligand>
        <name>NAD(+)</name>
        <dbReference type="ChEBI" id="CHEBI:57540"/>
    </ligand>
</feature>
<feature type="binding site" evidence="1">
    <location>
        <begin position="147"/>
        <end position="148"/>
    </location>
    <ligand>
        <name>NAD(+)</name>
        <dbReference type="ChEBI" id="CHEBI:57540"/>
    </ligand>
</feature>
<feature type="binding site" evidence="1">
    <location>
        <position position="175"/>
    </location>
    <ligand>
        <name>NAD(+)</name>
        <dbReference type="ChEBI" id="CHEBI:57540"/>
    </ligand>
</feature>
<feature type="binding site" evidence="1">
    <location>
        <position position="177"/>
    </location>
    <ligand>
        <name>NAD(+)</name>
        <dbReference type="ChEBI" id="CHEBI:57540"/>
    </ligand>
</feature>
<feature type="binding site" evidence="1">
    <location>
        <position position="246"/>
    </location>
    <ligand>
        <name>NAD(+)</name>
        <dbReference type="ChEBI" id="CHEBI:57540"/>
    </ligand>
</feature>
<protein>
    <recommendedName>
        <fullName evidence="1">NAD kinase</fullName>
        <ecNumber evidence="1">2.7.1.23</ecNumber>
    </recommendedName>
    <alternativeName>
        <fullName evidence="1">ATP-dependent NAD kinase</fullName>
    </alternativeName>
</protein>
<gene>
    <name evidence="1" type="primary">nadK</name>
    <name type="ordered locus">LHK_01211</name>
</gene>
<dbReference type="EC" id="2.7.1.23" evidence="1"/>
<dbReference type="EMBL" id="CP001154">
    <property type="protein sequence ID" value="ACO74202.1"/>
    <property type="molecule type" value="Genomic_DNA"/>
</dbReference>
<dbReference type="RefSeq" id="WP_012696689.1">
    <property type="nucleotide sequence ID" value="NC_012559.1"/>
</dbReference>
<dbReference type="SMR" id="C1D6U5"/>
<dbReference type="STRING" id="557598.LHK_01211"/>
<dbReference type="KEGG" id="lhk:LHK_01211"/>
<dbReference type="eggNOG" id="COG0061">
    <property type="taxonomic scope" value="Bacteria"/>
</dbReference>
<dbReference type="HOGENOM" id="CLU_008831_0_1_4"/>
<dbReference type="Proteomes" id="UP000002010">
    <property type="component" value="Chromosome"/>
</dbReference>
<dbReference type="GO" id="GO:0005737">
    <property type="term" value="C:cytoplasm"/>
    <property type="evidence" value="ECO:0007669"/>
    <property type="project" value="UniProtKB-SubCell"/>
</dbReference>
<dbReference type="GO" id="GO:0005524">
    <property type="term" value="F:ATP binding"/>
    <property type="evidence" value="ECO:0007669"/>
    <property type="project" value="UniProtKB-KW"/>
</dbReference>
<dbReference type="GO" id="GO:0046872">
    <property type="term" value="F:metal ion binding"/>
    <property type="evidence" value="ECO:0007669"/>
    <property type="project" value="UniProtKB-UniRule"/>
</dbReference>
<dbReference type="GO" id="GO:0051287">
    <property type="term" value="F:NAD binding"/>
    <property type="evidence" value="ECO:0007669"/>
    <property type="project" value="UniProtKB-ARBA"/>
</dbReference>
<dbReference type="GO" id="GO:0003951">
    <property type="term" value="F:NAD+ kinase activity"/>
    <property type="evidence" value="ECO:0007669"/>
    <property type="project" value="UniProtKB-UniRule"/>
</dbReference>
<dbReference type="GO" id="GO:0019674">
    <property type="term" value="P:NAD metabolic process"/>
    <property type="evidence" value="ECO:0007669"/>
    <property type="project" value="InterPro"/>
</dbReference>
<dbReference type="GO" id="GO:0006741">
    <property type="term" value="P:NADP biosynthetic process"/>
    <property type="evidence" value="ECO:0007669"/>
    <property type="project" value="UniProtKB-UniRule"/>
</dbReference>
<dbReference type="Gene3D" id="3.40.50.10330">
    <property type="entry name" value="Probable inorganic polyphosphate/atp-NAD kinase, domain 1"/>
    <property type="match status" value="1"/>
</dbReference>
<dbReference type="Gene3D" id="2.60.200.30">
    <property type="entry name" value="Probable inorganic polyphosphate/atp-NAD kinase, domain 2"/>
    <property type="match status" value="1"/>
</dbReference>
<dbReference type="HAMAP" id="MF_00361">
    <property type="entry name" value="NAD_kinase"/>
    <property type="match status" value="1"/>
</dbReference>
<dbReference type="InterPro" id="IPR017438">
    <property type="entry name" value="ATP-NAD_kinase_N"/>
</dbReference>
<dbReference type="InterPro" id="IPR017437">
    <property type="entry name" value="ATP-NAD_kinase_PpnK-typ_C"/>
</dbReference>
<dbReference type="InterPro" id="IPR016064">
    <property type="entry name" value="NAD/diacylglycerol_kinase_sf"/>
</dbReference>
<dbReference type="InterPro" id="IPR002504">
    <property type="entry name" value="NADK"/>
</dbReference>
<dbReference type="NCBIfam" id="NF002306">
    <property type="entry name" value="PRK01231.1"/>
    <property type="match status" value="1"/>
</dbReference>
<dbReference type="NCBIfam" id="NF002561">
    <property type="entry name" value="PRK02155.1"/>
    <property type="match status" value="1"/>
</dbReference>
<dbReference type="NCBIfam" id="NF003391">
    <property type="entry name" value="PRK04539.1"/>
    <property type="match status" value="1"/>
</dbReference>
<dbReference type="PANTHER" id="PTHR20275">
    <property type="entry name" value="NAD KINASE"/>
    <property type="match status" value="1"/>
</dbReference>
<dbReference type="PANTHER" id="PTHR20275:SF0">
    <property type="entry name" value="NAD KINASE"/>
    <property type="match status" value="1"/>
</dbReference>
<dbReference type="Pfam" id="PF01513">
    <property type="entry name" value="NAD_kinase"/>
    <property type="match status" value="1"/>
</dbReference>
<dbReference type="Pfam" id="PF20143">
    <property type="entry name" value="NAD_kinase_C"/>
    <property type="match status" value="1"/>
</dbReference>
<dbReference type="SUPFAM" id="SSF111331">
    <property type="entry name" value="NAD kinase/diacylglycerol kinase-like"/>
    <property type="match status" value="1"/>
</dbReference>
<comment type="function">
    <text evidence="1">Involved in the regulation of the intracellular balance of NAD and NADP, and is a key enzyme in the biosynthesis of NADP. Catalyzes specifically the phosphorylation on 2'-hydroxyl of the adenosine moiety of NAD to yield NADP.</text>
</comment>
<comment type="catalytic activity">
    <reaction evidence="1">
        <text>NAD(+) + ATP = ADP + NADP(+) + H(+)</text>
        <dbReference type="Rhea" id="RHEA:18629"/>
        <dbReference type="ChEBI" id="CHEBI:15378"/>
        <dbReference type="ChEBI" id="CHEBI:30616"/>
        <dbReference type="ChEBI" id="CHEBI:57540"/>
        <dbReference type="ChEBI" id="CHEBI:58349"/>
        <dbReference type="ChEBI" id="CHEBI:456216"/>
        <dbReference type="EC" id="2.7.1.23"/>
    </reaction>
</comment>
<comment type="cofactor">
    <cofactor evidence="1">
        <name>a divalent metal cation</name>
        <dbReference type="ChEBI" id="CHEBI:60240"/>
    </cofactor>
</comment>
<comment type="subcellular location">
    <subcellularLocation>
        <location evidence="1">Cytoplasm</location>
    </subcellularLocation>
</comment>
<comment type="similarity">
    <text evidence="1">Belongs to the NAD kinase family.</text>
</comment>
<sequence>MNWLFKKIGLVARQSKPEVVESLLLLSHHLESQGLHVFIDRDSVTRSQAQGLTLIDRSDFGKIVDVAIVLGGDGTMLSVARLLAPYRVPLIGINQGRLGFMTDIPLHQMLDSVSAILSGEFLPEERMLLQSTVVRDGVEIAHHLAFNDIVINRGAMGQMIEFEVFVDNQFVYSQRSDGLIISTPTGSTAYSLASGGPILHPTVPAISLVPICPQSLNNRPIAINDSSEVEFMLTRGIDARVHFDGQAHCDLMELDRVLVRRYRNSLKILHPLGYSYFDMLRQKLHWGERLL</sequence>
<proteinExistence type="inferred from homology"/>
<reference key="1">
    <citation type="journal article" date="2009" name="PLoS Genet.">
        <title>The complete genome and proteome of Laribacter hongkongensis reveal potential mechanisms for adaptations to different temperatures and habitats.</title>
        <authorList>
            <person name="Woo P.C.Y."/>
            <person name="Lau S.K.P."/>
            <person name="Tse H."/>
            <person name="Teng J.L.L."/>
            <person name="Curreem S.O."/>
            <person name="Tsang A.K.L."/>
            <person name="Fan R.Y.Y."/>
            <person name="Wong G.K.M."/>
            <person name="Huang Y."/>
            <person name="Loman N.J."/>
            <person name="Snyder L.A.S."/>
            <person name="Cai J.J."/>
            <person name="Huang J.-D."/>
            <person name="Mak W."/>
            <person name="Pallen M.J."/>
            <person name="Lok S."/>
            <person name="Yuen K.-Y."/>
        </authorList>
    </citation>
    <scope>NUCLEOTIDE SEQUENCE [LARGE SCALE GENOMIC DNA]</scope>
    <source>
        <strain>HLHK9</strain>
    </source>
</reference>
<organism>
    <name type="scientific">Laribacter hongkongensis (strain HLHK9)</name>
    <dbReference type="NCBI Taxonomy" id="557598"/>
    <lineage>
        <taxon>Bacteria</taxon>
        <taxon>Pseudomonadati</taxon>
        <taxon>Pseudomonadota</taxon>
        <taxon>Betaproteobacteria</taxon>
        <taxon>Neisseriales</taxon>
        <taxon>Aquaspirillaceae</taxon>
        <taxon>Laribacter</taxon>
    </lineage>
</organism>